<gene>
    <name type="primary">hspI</name>
    <name type="ORF">DDB_G0288921</name>
</gene>
<feature type="transit peptide" description="Mitochondrion" evidence="1">
    <location>
        <begin position="1"/>
        <end position="23"/>
    </location>
</feature>
<feature type="chain" id="PRO_0000363905" description="Small heat shock protein hspI, mitochondrial">
    <location>
        <begin position="24"/>
        <end position="223"/>
    </location>
</feature>
<feature type="domain" description="sHSP" evidence="2">
    <location>
        <begin position="109"/>
        <end position="223"/>
    </location>
</feature>
<reference key="1">
    <citation type="journal article" date="2005" name="Nature">
        <title>The genome of the social amoeba Dictyostelium discoideum.</title>
        <authorList>
            <person name="Eichinger L."/>
            <person name="Pachebat J.A."/>
            <person name="Gloeckner G."/>
            <person name="Rajandream M.A."/>
            <person name="Sucgang R."/>
            <person name="Berriman M."/>
            <person name="Song J."/>
            <person name="Olsen R."/>
            <person name="Szafranski K."/>
            <person name="Xu Q."/>
            <person name="Tunggal B."/>
            <person name="Kummerfeld S."/>
            <person name="Madera M."/>
            <person name="Konfortov B.A."/>
            <person name="Rivero F."/>
            <person name="Bankier A.T."/>
            <person name="Lehmann R."/>
            <person name="Hamlin N."/>
            <person name="Davies R."/>
            <person name="Gaudet P."/>
            <person name="Fey P."/>
            <person name="Pilcher K."/>
            <person name="Chen G."/>
            <person name="Saunders D."/>
            <person name="Sodergren E.J."/>
            <person name="Davis P."/>
            <person name="Kerhornou A."/>
            <person name="Nie X."/>
            <person name="Hall N."/>
            <person name="Anjard C."/>
            <person name="Hemphill L."/>
            <person name="Bason N."/>
            <person name="Farbrother P."/>
            <person name="Desany B."/>
            <person name="Just E."/>
            <person name="Morio T."/>
            <person name="Rost R."/>
            <person name="Churcher C.M."/>
            <person name="Cooper J."/>
            <person name="Haydock S."/>
            <person name="van Driessche N."/>
            <person name="Cronin A."/>
            <person name="Goodhead I."/>
            <person name="Muzny D.M."/>
            <person name="Mourier T."/>
            <person name="Pain A."/>
            <person name="Lu M."/>
            <person name="Harper D."/>
            <person name="Lindsay R."/>
            <person name="Hauser H."/>
            <person name="James K.D."/>
            <person name="Quiles M."/>
            <person name="Madan Babu M."/>
            <person name="Saito T."/>
            <person name="Buchrieser C."/>
            <person name="Wardroper A."/>
            <person name="Felder M."/>
            <person name="Thangavelu M."/>
            <person name="Johnson D."/>
            <person name="Knights A."/>
            <person name="Loulseged H."/>
            <person name="Mungall K.L."/>
            <person name="Oliver K."/>
            <person name="Price C."/>
            <person name="Quail M.A."/>
            <person name="Urushihara H."/>
            <person name="Hernandez J."/>
            <person name="Rabbinowitsch E."/>
            <person name="Steffen D."/>
            <person name="Sanders M."/>
            <person name="Ma J."/>
            <person name="Kohara Y."/>
            <person name="Sharp S."/>
            <person name="Simmonds M.N."/>
            <person name="Spiegler S."/>
            <person name="Tivey A."/>
            <person name="Sugano S."/>
            <person name="White B."/>
            <person name="Walker D."/>
            <person name="Woodward J.R."/>
            <person name="Winckler T."/>
            <person name="Tanaka Y."/>
            <person name="Shaulsky G."/>
            <person name="Schleicher M."/>
            <person name="Weinstock G.M."/>
            <person name="Rosenthal A."/>
            <person name="Cox E.C."/>
            <person name="Chisholm R.L."/>
            <person name="Gibbs R.A."/>
            <person name="Loomis W.F."/>
            <person name="Platzer M."/>
            <person name="Kay R.R."/>
            <person name="Williams J.G."/>
            <person name="Dear P.H."/>
            <person name="Noegel A.A."/>
            <person name="Barrell B.G."/>
            <person name="Kuspa A."/>
        </authorList>
    </citation>
    <scope>NUCLEOTIDE SEQUENCE [LARGE SCALE GENOMIC DNA]</scope>
    <source>
        <strain>AX4</strain>
    </source>
</reference>
<comment type="subcellular location">
    <subcellularLocation>
        <location evidence="3">Mitochondrion</location>
    </subcellularLocation>
</comment>
<comment type="similarity">
    <text evidence="2">Belongs to the small heat shock protein (HSP20) family.</text>
</comment>
<organism>
    <name type="scientific">Dictyostelium discoideum</name>
    <name type="common">Social amoeba</name>
    <dbReference type="NCBI Taxonomy" id="44689"/>
    <lineage>
        <taxon>Eukaryota</taxon>
        <taxon>Amoebozoa</taxon>
        <taxon>Evosea</taxon>
        <taxon>Eumycetozoa</taxon>
        <taxon>Dictyostelia</taxon>
        <taxon>Dictyosteliales</taxon>
        <taxon>Dictyosteliaceae</taxon>
        <taxon>Dictyostelium</taxon>
    </lineage>
</organism>
<dbReference type="EMBL" id="AAFI02000126">
    <property type="protein sequence ID" value="EAL62984.1"/>
    <property type="molecule type" value="Genomic_DNA"/>
</dbReference>
<dbReference type="RefSeq" id="XP_636488.1">
    <property type="nucleotide sequence ID" value="XM_631396.1"/>
</dbReference>
<dbReference type="SMR" id="Q54I91"/>
<dbReference type="STRING" id="44689.Q54I91"/>
<dbReference type="PaxDb" id="44689-DDB0232120"/>
<dbReference type="EnsemblProtists" id="EAL62984">
    <property type="protein sequence ID" value="EAL62984"/>
    <property type="gene ID" value="DDB_G0288921"/>
</dbReference>
<dbReference type="GeneID" id="8626871"/>
<dbReference type="KEGG" id="ddi:DDB_G0288921"/>
<dbReference type="dictyBase" id="DDB_G0288921">
    <property type="gene designation" value="hspI"/>
</dbReference>
<dbReference type="VEuPathDB" id="AmoebaDB:DDB_G0288921"/>
<dbReference type="eggNOG" id="ENOG502RHHV">
    <property type="taxonomic scope" value="Eukaryota"/>
</dbReference>
<dbReference type="HOGENOM" id="CLU_1242060_0_0_1"/>
<dbReference type="InParanoid" id="Q54I91"/>
<dbReference type="OMA" id="ENIMEQW"/>
<dbReference type="PhylomeDB" id="Q54I91"/>
<dbReference type="PRO" id="PR:Q54I91"/>
<dbReference type="Proteomes" id="UP000002195">
    <property type="component" value="Chromosome 5"/>
</dbReference>
<dbReference type="GO" id="GO:0005739">
    <property type="term" value="C:mitochondrion"/>
    <property type="evidence" value="ECO:0007669"/>
    <property type="project" value="UniProtKB-SubCell"/>
</dbReference>
<dbReference type="GO" id="GO:0051082">
    <property type="term" value="F:unfolded protein binding"/>
    <property type="evidence" value="ECO:0000318"/>
    <property type="project" value="GO_Central"/>
</dbReference>
<dbReference type="GO" id="GO:0051259">
    <property type="term" value="P:protein complex oligomerization"/>
    <property type="evidence" value="ECO:0000318"/>
    <property type="project" value="GO_Central"/>
</dbReference>
<dbReference type="GO" id="GO:0006457">
    <property type="term" value="P:protein folding"/>
    <property type="evidence" value="ECO:0000318"/>
    <property type="project" value="GO_Central"/>
</dbReference>
<dbReference type="GO" id="GO:0009408">
    <property type="term" value="P:response to heat"/>
    <property type="evidence" value="ECO:0000318"/>
    <property type="project" value="GO_Central"/>
</dbReference>
<dbReference type="GO" id="GO:0042542">
    <property type="term" value="P:response to hydrogen peroxide"/>
    <property type="evidence" value="ECO:0000318"/>
    <property type="project" value="GO_Central"/>
</dbReference>
<dbReference type="GO" id="GO:0009651">
    <property type="term" value="P:response to salt stress"/>
    <property type="evidence" value="ECO:0000318"/>
    <property type="project" value="GO_Central"/>
</dbReference>
<dbReference type="CDD" id="cd06464">
    <property type="entry name" value="ACD_sHsps-like"/>
    <property type="match status" value="1"/>
</dbReference>
<dbReference type="Gene3D" id="2.60.40.790">
    <property type="match status" value="1"/>
</dbReference>
<dbReference type="InterPro" id="IPR002068">
    <property type="entry name" value="A-crystallin/Hsp20_dom"/>
</dbReference>
<dbReference type="InterPro" id="IPR008978">
    <property type="entry name" value="HSP20-like_chaperone"/>
</dbReference>
<dbReference type="InterPro" id="IPR044587">
    <property type="entry name" value="HSP21-like"/>
</dbReference>
<dbReference type="PANTHER" id="PTHR46733">
    <property type="entry name" value="26.5 KDA HEAT SHOCK PROTEIN, MITOCHONDRIAL"/>
    <property type="match status" value="1"/>
</dbReference>
<dbReference type="PANTHER" id="PTHR46733:SF4">
    <property type="entry name" value="HEAT SHOCK PROTEIN 21, CHLOROPLASTIC"/>
    <property type="match status" value="1"/>
</dbReference>
<dbReference type="Pfam" id="PF00011">
    <property type="entry name" value="HSP20"/>
    <property type="match status" value="1"/>
</dbReference>
<dbReference type="SUPFAM" id="SSF49764">
    <property type="entry name" value="HSP20-like chaperones"/>
    <property type="match status" value="1"/>
</dbReference>
<dbReference type="PROSITE" id="PS01031">
    <property type="entry name" value="SHSP"/>
    <property type="match status" value="1"/>
</dbReference>
<evidence type="ECO:0000255" key="1"/>
<evidence type="ECO:0000255" key="2">
    <source>
        <dbReference type="PROSITE-ProRule" id="PRU00285"/>
    </source>
</evidence>
<evidence type="ECO:0000305" key="3"/>
<name>HSPI_DICDI</name>
<proteinExistence type="inferred from homology"/>
<protein>
    <recommendedName>
        <fullName>Small heat shock protein hspI, mitochondrial</fullName>
    </recommendedName>
</protein>
<accession>Q54I91</accession>
<keyword id="KW-0496">Mitochondrion</keyword>
<keyword id="KW-1185">Reference proteome</keyword>
<keyword id="KW-0346">Stress response</keyword>
<keyword id="KW-0809">Transit peptide</keyword>
<sequence length="223" mass="25808">MYKLSKTTPFFFRRAFLCGRRGGYPESNLSNFGRPTASTLSTSQSSGICETNDYSNKPYFFQVKFEDRFSKKIDKFNECFRHFYYSHGGQQYMDKFESIFDNWEHEFSKTRGFRSPKTFINESDKGIEIRVELPGFSKENVKIDFSNGLLNIDALNKNTTIQQPSSNNQQVESQHQSLMEFKKSIKLPEDIDVSLIKAIMNNGILEISIPKNSYVKSTTINVQ</sequence>